<keyword id="KW-0460">Magnesium</keyword>
<keyword id="KW-0479">Metal-binding</keyword>
<keyword id="KW-0784">Thiamine biosynthesis</keyword>
<keyword id="KW-0808">Transferase</keyword>
<comment type="function">
    <text evidence="1">Condenses 4-methyl-5-(beta-hydroxyethyl)thiazole monophosphate (THZ-P) and 2-methyl-4-amino-5-hydroxymethyl pyrimidine pyrophosphate (HMP-PP) to form thiamine monophosphate (TMP).</text>
</comment>
<comment type="catalytic activity">
    <reaction evidence="1">
        <text>2-[(2R,5Z)-2-carboxy-4-methylthiazol-5(2H)-ylidene]ethyl phosphate + 4-amino-2-methyl-5-(diphosphooxymethyl)pyrimidine + 2 H(+) = thiamine phosphate + CO2 + diphosphate</text>
        <dbReference type="Rhea" id="RHEA:47844"/>
        <dbReference type="ChEBI" id="CHEBI:15378"/>
        <dbReference type="ChEBI" id="CHEBI:16526"/>
        <dbReference type="ChEBI" id="CHEBI:33019"/>
        <dbReference type="ChEBI" id="CHEBI:37575"/>
        <dbReference type="ChEBI" id="CHEBI:57841"/>
        <dbReference type="ChEBI" id="CHEBI:62899"/>
        <dbReference type="EC" id="2.5.1.3"/>
    </reaction>
</comment>
<comment type="catalytic activity">
    <reaction evidence="1">
        <text>2-(2-carboxy-4-methylthiazol-5-yl)ethyl phosphate + 4-amino-2-methyl-5-(diphosphooxymethyl)pyrimidine + 2 H(+) = thiamine phosphate + CO2 + diphosphate</text>
        <dbReference type="Rhea" id="RHEA:47848"/>
        <dbReference type="ChEBI" id="CHEBI:15378"/>
        <dbReference type="ChEBI" id="CHEBI:16526"/>
        <dbReference type="ChEBI" id="CHEBI:33019"/>
        <dbReference type="ChEBI" id="CHEBI:37575"/>
        <dbReference type="ChEBI" id="CHEBI:57841"/>
        <dbReference type="ChEBI" id="CHEBI:62890"/>
        <dbReference type="EC" id="2.5.1.3"/>
    </reaction>
</comment>
<comment type="catalytic activity">
    <reaction evidence="1">
        <text>4-methyl-5-(2-phosphooxyethyl)-thiazole + 4-amino-2-methyl-5-(diphosphooxymethyl)pyrimidine + H(+) = thiamine phosphate + diphosphate</text>
        <dbReference type="Rhea" id="RHEA:22328"/>
        <dbReference type="ChEBI" id="CHEBI:15378"/>
        <dbReference type="ChEBI" id="CHEBI:33019"/>
        <dbReference type="ChEBI" id="CHEBI:37575"/>
        <dbReference type="ChEBI" id="CHEBI:57841"/>
        <dbReference type="ChEBI" id="CHEBI:58296"/>
        <dbReference type="EC" id="2.5.1.3"/>
    </reaction>
</comment>
<comment type="cofactor">
    <cofactor evidence="1">
        <name>Mg(2+)</name>
        <dbReference type="ChEBI" id="CHEBI:18420"/>
    </cofactor>
    <text evidence="1">Binds 1 Mg(2+) ion per subunit.</text>
</comment>
<comment type="pathway">
    <text evidence="1">Cofactor biosynthesis; thiamine diphosphate biosynthesis; thiamine phosphate from 4-amino-2-methyl-5-diphosphomethylpyrimidine and 4-methyl-5-(2-phosphoethyl)-thiazole: step 1/1.</text>
</comment>
<comment type="similarity">
    <text evidence="1">Belongs to the thiamine-phosphate synthase family.</text>
</comment>
<feature type="chain" id="PRO_1000008132" description="Thiamine-phosphate synthase">
    <location>
        <begin position="1"/>
        <end position="212"/>
    </location>
</feature>
<feature type="binding site" evidence="1">
    <location>
        <begin position="38"/>
        <end position="42"/>
    </location>
    <ligand>
        <name>4-amino-2-methyl-5-(diphosphooxymethyl)pyrimidine</name>
        <dbReference type="ChEBI" id="CHEBI:57841"/>
    </ligand>
</feature>
<feature type="binding site" evidence="1">
    <location>
        <position position="71"/>
    </location>
    <ligand>
        <name>Mg(2+)</name>
        <dbReference type="ChEBI" id="CHEBI:18420"/>
    </ligand>
</feature>
<feature type="binding site" evidence="1">
    <location>
        <position position="90"/>
    </location>
    <ligand>
        <name>Mg(2+)</name>
        <dbReference type="ChEBI" id="CHEBI:18420"/>
    </ligand>
</feature>
<feature type="binding site" evidence="1">
    <location>
        <position position="138"/>
    </location>
    <ligand>
        <name>4-amino-2-methyl-5-(diphosphooxymethyl)pyrimidine</name>
        <dbReference type="ChEBI" id="CHEBI:57841"/>
    </ligand>
</feature>
<feature type="binding site" evidence="1">
    <location>
        <position position="166"/>
    </location>
    <ligand>
        <name>2-[(2R,5Z)-2-carboxy-4-methylthiazol-5(2H)-ylidene]ethyl phosphate</name>
        <dbReference type="ChEBI" id="CHEBI:62899"/>
    </ligand>
</feature>
<reference key="1">
    <citation type="journal article" date="2005" name="Genome Res.">
        <title>The Chlamydophila abortus genome sequence reveals an array of variable proteins that contribute to interspecies variation.</title>
        <authorList>
            <person name="Thomson N.R."/>
            <person name="Yeats C."/>
            <person name="Bell K."/>
            <person name="Holden M.T.G."/>
            <person name="Bentley S.D."/>
            <person name="Livingstone M."/>
            <person name="Cerdeno-Tarraga A.-M."/>
            <person name="Harris B."/>
            <person name="Doggett J."/>
            <person name="Ormond D."/>
            <person name="Mungall K."/>
            <person name="Clarke K."/>
            <person name="Feltwell T."/>
            <person name="Hance Z."/>
            <person name="Sanders M."/>
            <person name="Quail M.A."/>
            <person name="Price C."/>
            <person name="Barrell B.G."/>
            <person name="Parkhill J."/>
            <person name="Longbottom D."/>
        </authorList>
    </citation>
    <scope>NUCLEOTIDE SEQUENCE [LARGE SCALE GENOMIC DNA]</scope>
    <source>
        <strain>DSM 27085 / S26/3</strain>
    </source>
</reference>
<dbReference type="EC" id="2.5.1.3" evidence="1"/>
<dbReference type="EMBL" id="CR848038">
    <property type="protein sequence ID" value="CAH63656.1"/>
    <property type="molecule type" value="Genomic_DNA"/>
</dbReference>
<dbReference type="RefSeq" id="WP_006343864.1">
    <property type="nucleotide sequence ID" value="NC_004552.2"/>
</dbReference>
<dbReference type="SMR" id="Q5L6R5"/>
<dbReference type="GeneID" id="93024757"/>
<dbReference type="KEGG" id="cab:CAB198"/>
<dbReference type="eggNOG" id="COG0352">
    <property type="taxonomic scope" value="Bacteria"/>
</dbReference>
<dbReference type="HOGENOM" id="CLU_018272_3_2_0"/>
<dbReference type="OrthoDB" id="9812206at2"/>
<dbReference type="UniPathway" id="UPA00060">
    <property type="reaction ID" value="UER00141"/>
</dbReference>
<dbReference type="Proteomes" id="UP000001012">
    <property type="component" value="Chromosome"/>
</dbReference>
<dbReference type="GO" id="GO:0005737">
    <property type="term" value="C:cytoplasm"/>
    <property type="evidence" value="ECO:0007669"/>
    <property type="project" value="TreeGrafter"/>
</dbReference>
<dbReference type="GO" id="GO:0000287">
    <property type="term" value="F:magnesium ion binding"/>
    <property type="evidence" value="ECO:0007669"/>
    <property type="project" value="UniProtKB-UniRule"/>
</dbReference>
<dbReference type="GO" id="GO:0004789">
    <property type="term" value="F:thiamine-phosphate diphosphorylase activity"/>
    <property type="evidence" value="ECO:0007669"/>
    <property type="project" value="UniProtKB-UniRule"/>
</dbReference>
<dbReference type="GO" id="GO:0009228">
    <property type="term" value="P:thiamine biosynthetic process"/>
    <property type="evidence" value="ECO:0007669"/>
    <property type="project" value="UniProtKB-KW"/>
</dbReference>
<dbReference type="GO" id="GO:0009229">
    <property type="term" value="P:thiamine diphosphate biosynthetic process"/>
    <property type="evidence" value="ECO:0007669"/>
    <property type="project" value="UniProtKB-UniRule"/>
</dbReference>
<dbReference type="CDD" id="cd00564">
    <property type="entry name" value="TMP_TenI"/>
    <property type="match status" value="1"/>
</dbReference>
<dbReference type="Gene3D" id="3.20.20.70">
    <property type="entry name" value="Aldolase class I"/>
    <property type="match status" value="1"/>
</dbReference>
<dbReference type="HAMAP" id="MF_00097">
    <property type="entry name" value="TMP_synthase"/>
    <property type="match status" value="1"/>
</dbReference>
<dbReference type="InterPro" id="IPR013785">
    <property type="entry name" value="Aldolase_TIM"/>
</dbReference>
<dbReference type="InterPro" id="IPR036206">
    <property type="entry name" value="ThiamineP_synth_sf"/>
</dbReference>
<dbReference type="InterPro" id="IPR022998">
    <property type="entry name" value="ThiamineP_synth_TenI"/>
</dbReference>
<dbReference type="InterPro" id="IPR034291">
    <property type="entry name" value="TMP_synthase"/>
</dbReference>
<dbReference type="NCBIfam" id="TIGR00693">
    <property type="entry name" value="thiE"/>
    <property type="match status" value="1"/>
</dbReference>
<dbReference type="PANTHER" id="PTHR20857:SF23">
    <property type="entry name" value="THIAMINE BIOSYNTHETIC BIFUNCTIONAL ENZYME"/>
    <property type="match status" value="1"/>
</dbReference>
<dbReference type="PANTHER" id="PTHR20857">
    <property type="entry name" value="THIAMINE-PHOSPHATE PYROPHOSPHORYLASE"/>
    <property type="match status" value="1"/>
</dbReference>
<dbReference type="Pfam" id="PF02581">
    <property type="entry name" value="TMP-TENI"/>
    <property type="match status" value="1"/>
</dbReference>
<dbReference type="SUPFAM" id="SSF51391">
    <property type="entry name" value="Thiamin phosphate synthase"/>
    <property type="match status" value="1"/>
</dbReference>
<evidence type="ECO:0000255" key="1">
    <source>
        <dbReference type="HAMAP-Rule" id="MF_00097"/>
    </source>
</evidence>
<protein>
    <recommendedName>
        <fullName evidence="1">Thiamine-phosphate synthase</fullName>
        <shortName evidence="1">TP synthase</shortName>
        <shortName evidence="1">TPS</shortName>
        <ecNumber evidence="1">2.5.1.3</ecNumber>
    </recommendedName>
    <alternativeName>
        <fullName evidence="1">Thiamine-phosphate pyrophosphorylase</fullName>
        <shortName evidence="1">TMP pyrophosphorylase</shortName>
        <shortName evidence="1">TMP-PPase</shortName>
    </alternativeName>
</protein>
<proteinExistence type="inferred from homology"/>
<sequence>MEENFFKLILITNKQQISVEEYLDFVCACVQSGVTSVQLREKELSYRELLGFGEALKSILDPLEIPLIVSDSVSVCLDLDATGVHLGQTDGDVIEARELLGSDKIIGWNVNTLDQLLNANTLPIDYLGLSAMFATQNKPDATNLWGFSGLEQAVSLCEHPIVAIGGIDESNASKVIDAGAAGIAAIGVFHSAQNPSSVTKALREIVDRGLRC</sequence>
<accession>Q5L6R5</accession>
<name>THIE_CHLAB</name>
<gene>
    <name evidence="1" type="primary">thiE</name>
    <name type="ordered locus">CAB198</name>
</gene>
<organism>
    <name type="scientific">Chlamydia abortus (strain DSM 27085 / S26/3)</name>
    <name type="common">Chlamydophila abortus</name>
    <dbReference type="NCBI Taxonomy" id="218497"/>
    <lineage>
        <taxon>Bacteria</taxon>
        <taxon>Pseudomonadati</taxon>
        <taxon>Chlamydiota</taxon>
        <taxon>Chlamydiia</taxon>
        <taxon>Chlamydiales</taxon>
        <taxon>Chlamydiaceae</taxon>
        <taxon>Chlamydia/Chlamydophila group</taxon>
        <taxon>Chlamydia</taxon>
    </lineage>
</organism>